<name>AGL1_ARATH</name>
<comment type="function">
    <text evidence="4">Probable transcription factor. Interacts genetically with TT16/AGL32 in a partially antagonistic manner during flower development. Is essential for the coordination of cell divisions in ovule, seed coat development and endosperm formation (PubMed:27776173).</text>
</comment>
<comment type="subunit">
    <text evidence="3">Interacts with AGL15 and AGL16.</text>
</comment>
<comment type="interaction">
    <interactant intactId="EBI-592304">
        <id>P29381</id>
    </interactant>
    <interactant intactId="EBI-621986">
        <id>Q9SZJ6</id>
        <label>AGL21</label>
    </interactant>
    <organismsDiffer>false</organismsDiffer>
    <experiments>4</experiments>
</comment>
<comment type="interaction">
    <interactant intactId="EBI-592304">
        <id>P29381</id>
    </interactant>
    <interactant intactId="EBI-592020">
        <id>O22456</id>
        <label>SEP3</label>
    </interactant>
    <organismsDiffer>false</organismsDiffer>
    <experiments>6</experiments>
</comment>
<comment type="subcellular location">
    <subcellularLocation>
        <location>Nucleus</location>
    </subcellularLocation>
</comment>
<comment type="alternative products">
    <event type="alternative splicing"/>
    <isoform>
        <id>P29381-1</id>
        <name>1</name>
        <sequence type="displayed"/>
    </isoform>
    <text>A number of isoforms are produced. According to EST sequences.</text>
</comment>
<reference key="1">
    <citation type="journal article" date="1991" name="Genes Dev.">
        <title>AGL1-AGL6, an Arabidopsis gene family with similarity to floral homeotic and transcription factor genes.</title>
        <authorList>
            <person name="Ma H."/>
            <person name="Yanofsky M.F."/>
            <person name="Meyerowitz E.M."/>
        </authorList>
    </citation>
    <scope>NUCLEOTIDE SEQUENCE [MRNA]</scope>
</reference>
<reference key="2">
    <citation type="journal article" date="2000" name="Nature">
        <title>Sequence and analysis of chromosome 3 of the plant Arabidopsis thaliana.</title>
        <authorList>
            <person name="Salanoubat M."/>
            <person name="Lemcke K."/>
            <person name="Rieger M."/>
            <person name="Ansorge W."/>
            <person name="Unseld M."/>
            <person name="Fartmann B."/>
            <person name="Valle G."/>
            <person name="Bloecker H."/>
            <person name="Perez-Alonso M."/>
            <person name="Obermaier B."/>
            <person name="Delseny M."/>
            <person name="Boutry M."/>
            <person name="Grivell L.A."/>
            <person name="Mache R."/>
            <person name="Puigdomenech P."/>
            <person name="De Simone V."/>
            <person name="Choisne N."/>
            <person name="Artiguenave F."/>
            <person name="Robert C."/>
            <person name="Brottier P."/>
            <person name="Wincker P."/>
            <person name="Cattolico L."/>
            <person name="Weissenbach J."/>
            <person name="Saurin W."/>
            <person name="Quetier F."/>
            <person name="Schaefer M."/>
            <person name="Mueller-Auer S."/>
            <person name="Gabel C."/>
            <person name="Fuchs M."/>
            <person name="Benes V."/>
            <person name="Wurmbach E."/>
            <person name="Drzonek H."/>
            <person name="Erfle H."/>
            <person name="Jordan N."/>
            <person name="Bangert S."/>
            <person name="Wiedelmann R."/>
            <person name="Kranz H."/>
            <person name="Voss H."/>
            <person name="Holland R."/>
            <person name="Brandt P."/>
            <person name="Nyakatura G."/>
            <person name="Vezzi A."/>
            <person name="D'Angelo M."/>
            <person name="Pallavicini A."/>
            <person name="Toppo S."/>
            <person name="Simionati B."/>
            <person name="Conrad A."/>
            <person name="Hornischer K."/>
            <person name="Kauer G."/>
            <person name="Loehnert T.-H."/>
            <person name="Nordsiek G."/>
            <person name="Reichelt J."/>
            <person name="Scharfe M."/>
            <person name="Schoen O."/>
            <person name="Bargues M."/>
            <person name="Terol J."/>
            <person name="Climent J."/>
            <person name="Navarro P."/>
            <person name="Collado C."/>
            <person name="Perez-Perez A."/>
            <person name="Ottenwaelder B."/>
            <person name="Duchemin D."/>
            <person name="Cooke R."/>
            <person name="Laudie M."/>
            <person name="Berger-Llauro C."/>
            <person name="Purnelle B."/>
            <person name="Masuy D."/>
            <person name="de Haan M."/>
            <person name="Maarse A.C."/>
            <person name="Alcaraz J.-P."/>
            <person name="Cottet A."/>
            <person name="Casacuberta E."/>
            <person name="Monfort A."/>
            <person name="Argiriou A."/>
            <person name="Flores M."/>
            <person name="Liguori R."/>
            <person name="Vitale D."/>
            <person name="Mannhaupt G."/>
            <person name="Haase D."/>
            <person name="Schoof H."/>
            <person name="Rudd S."/>
            <person name="Zaccaria P."/>
            <person name="Mewes H.-W."/>
            <person name="Mayer K.F.X."/>
            <person name="Kaul S."/>
            <person name="Town C.D."/>
            <person name="Koo H.L."/>
            <person name="Tallon L.J."/>
            <person name="Jenkins J."/>
            <person name="Rooney T."/>
            <person name="Rizzo M."/>
            <person name="Walts A."/>
            <person name="Utterback T."/>
            <person name="Fujii C.Y."/>
            <person name="Shea T.P."/>
            <person name="Creasy T.H."/>
            <person name="Haas B."/>
            <person name="Maiti R."/>
            <person name="Wu D."/>
            <person name="Peterson J."/>
            <person name="Van Aken S."/>
            <person name="Pai G."/>
            <person name="Militscher J."/>
            <person name="Sellers P."/>
            <person name="Gill J.E."/>
            <person name="Feldblyum T.V."/>
            <person name="Preuss D."/>
            <person name="Lin X."/>
            <person name="Nierman W.C."/>
            <person name="Salzberg S.L."/>
            <person name="White O."/>
            <person name="Venter J.C."/>
            <person name="Fraser C.M."/>
            <person name="Kaneko T."/>
            <person name="Nakamura Y."/>
            <person name="Sato S."/>
            <person name="Kato T."/>
            <person name="Asamizu E."/>
            <person name="Sasamoto S."/>
            <person name="Kimura T."/>
            <person name="Idesawa K."/>
            <person name="Kawashima K."/>
            <person name="Kishida Y."/>
            <person name="Kiyokawa C."/>
            <person name="Kohara M."/>
            <person name="Matsumoto M."/>
            <person name="Matsuno A."/>
            <person name="Muraki A."/>
            <person name="Nakayama S."/>
            <person name="Nakazaki N."/>
            <person name="Shinpo S."/>
            <person name="Takeuchi C."/>
            <person name="Wada T."/>
            <person name="Watanabe A."/>
            <person name="Yamada M."/>
            <person name="Yasuda M."/>
            <person name="Tabata S."/>
        </authorList>
    </citation>
    <scope>NUCLEOTIDE SEQUENCE [LARGE SCALE GENOMIC DNA]</scope>
    <source>
        <strain>cv. Columbia</strain>
    </source>
</reference>
<reference key="3">
    <citation type="journal article" date="2017" name="Plant J.">
        <title>Araport11: a complete reannotation of the Arabidopsis thaliana reference genome.</title>
        <authorList>
            <person name="Cheng C.Y."/>
            <person name="Krishnakumar V."/>
            <person name="Chan A.P."/>
            <person name="Thibaud-Nissen F."/>
            <person name="Schobel S."/>
            <person name="Town C.D."/>
        </authorList>
    </citation>
    <scope>GENOME REANNOTATION</scope>
    <source>
        <strain>cv. Columbia</strain>
    </source>
</reference>
<reference key="4">
    <citation type="submission" date="2002-03" db="EMBL/GenBank/DDBJ databases">
        <title>Full-length cDNA from Arabidopsis thaliana.</title>
        <authorList>
            <person name="Brover V.V."/>
            <person name="Troukhan M.E."/>
            <person name="Alexandrov N.A."/>
            <person name="Lu Y.-P."/>
            <person name="Flavell R.B."/>
            <person name="Feldmann K.A."/>
        </authorList>
    </citation>
    <scope>NUCLEOTIDE SEQUENCE [LARGE SCALE MRNA]</scope>
</reference>
<reference key="5">
    <citation type="journal article" date="2005" name="Plant Cell">
        <title>Comprehensive interaction map of the Arabidopsis MADS Box transcription factors.</title>
        <authorList>
            <person name="de Folter S."/>
            <person name="Immink R.G.H."/>
            <person name="Kieffer M."/>
            <person name="Parenicova L."/>
            <person name="Henz S.R."/>
            <person name="Weigel D."/>
            <person name="Busscher M."/>
            <person name="Kooiker M."/>
            <person name="Colombo L."/>
            <person name="Kater M.M."/>
            <person name="Davies B."/>
            <person name="Angenent G.C."/>
        </authorList>
    </citation>
    <scope>INTERACTION WITH AGL15 AND AGL16</scope>
</reference>
<reference key="6">
    <citation type="journal article" date="2016" name="PLoS ONE">
        <title>The MADS box genes ABS, SHP1, and SHP2 are essential for the coordination of cell divisions in ovule and seed coat development and for endosperm formation in Arabidopsis thaliana.</title>
        <authorList>
            <person name="Ehlers K."/>
            <person name="Bhide A.S."/>
            <person name="Tekleyohans D.G."/>
            <person name="Wittkop B."/>
            <person name="Snowdon R.J."/>
            <person name="Becker A."/>
        </authorList>
    </citation>
    <scope>FUNCTION</scope>
</reference>
<proteinExistence type="evidence at protein level"/>
<organism>
    <name type="scientific">Arabidopsis thaliana</name>
    <name type="common">Mouse-ear cress</name>
    <dbReference type="NCBI Taxonomy" id="3702"/>
    <lineage>
        <taxon>Eukaryota</taxon>
        <taxon>Viridiplantae</taxon>
        <taxon>Streptophyta</taxon>
        <taxon>Embryophyta</taxon>
        <taxon>Tracheophyta</taxon>
        <taxon>Spermatophyta</taxon>
        <taxon>Magnoliopsida</taxon>
        <taxon>eudicotyledons</taxon>
        <taxon>Gunneridae</taxon>
        <taxon>Pentapetalae</taxon>
        <taxon>rosids</taxon>
        <taxon>malvids</taxon>
        <taxon>Brassicales</taxon>
        <taxon>Brassicaceae</taxon>
        <taxon>Camelineae</taxon>
        <taxon>Arabidopsis</taxon>
    </lineage>
</organism>
<dbReference type="EMBL" id="M55550">
    <property type="protein sequence ID" value="AAA32730.1"/>
    <property type="molecule type" value="mRNA"/>
</dbReference>
<dbReference type="EMBL" id="AL353032">
    <property type="protein sequence ID" value="CAB88295.1"/>
    <property type="molecule type" value="Genomic_DNA"/>
</dbReference>
<dbReference type="EMBL" id="CP002686">
    <property type="protein sequence ID" value="AEE79829.1"/>
    <property type="molecule type" value="Genomic_DNA"/>
</dbReference>
<dbReference type="EMBL" id="AY086196">
    <property type="protein sequence ID" value="AAM64275.1"/>
    <property type="molecule type" value="mRNA"/>
</dbReference>
<dbReference type="PIR" id="A39534">
    <property type="entry name" value="A39534"/>
</dbReference>
<dbReference type="RefSeq" id="NP_191437.1">
    <molecule id="P29381-1"/>
    <property type="nucleotide sequence ID" value="NM_115740.3"/>
</dbReference>
<dbReference type="SMR" id="P29381"/>
<dbReference type="BioGRID" id="10362">
    <property type="interactions" value="24"/>
</dbReference>
<dbReference type="FunCoup" id="P29381">
    <property type="interactions" value="29"/>
</dbReference>
<dbReference type="IntAct" id="P29381">
    <property type="interactions" value="21"/>
</dbReference>
<dbReference type="STRING" id="3702.P29381"/>
<dbReference type="PaxDb" id="3702-AT3G58780.3"/>
<dbReference type="EnsemblPlants" id="AT3G58780.1">
    <molecule id="P29381-1"/>
    <property type="protein sequence ID" value="AT3G58780.1"/>
    <property type="gene ID" value="AT3G58780"/>
</dbReference>
<dbReference type="GeneID" id="825047"/>
<dbReference type="Gramene" id="AT3G58780.1">
    <molecule id="P29381-1"/>
    <property type="protein sequence ID" value="AT3G58780.1"/>
    <property type="gene ID" value="AT3G58780"/>
</dbReference>
<dbReference type="KEGG" id="ath:AT3G58780"/>
<dbReference type="Araport" id="AT3G58780"/>
<dbReference type="TAIR" id="AT3G58780">
    <property type="gene designation" value="SHP1"/>
</dbReference>
<dbReference type="eggNOG" id="KOG0014">
    <property type="taxonomic scope" value="Eukaryota"/>
</dbReference>
<dbReference type="HOGENOM" id="CLU_053053_0_0_1"/>
<dbReference type="InParanoid" id="P29381"/>
<dbReference type="OrthoDB" id="1898716at2759"/>
<dbReference type="PhylomeDB" id="P29381"/>
<dbReference type="PRO" id="PR:P29381"/>
<dbReference type="Proteomes" id="UP000006548">
    <property type="component" value="Chromosome 3"/>
</dbReference>
<dbReference type="ExpressionAtlas" id="P29381">
    <property type="expression patterns" value="baseline and differential"/>
</dbReference>
<dbReference type="GO" id="GO:0005634">
    <property type="term" value="C:nucleus"/>
    <property type="evidence" value="ECO:0007669"/>
    <property type="project" value="UniProtKB-SubCell"/>
</dbReference>
<dbReference type="GO" id="GO:0003700">
    <property type="term" value="F:DNA-binding transcription factor activity"/>
    <property type="evidence" value="ECO:0007669"/>
    <property type="project" value="InterPro"/>
</dbReference>
<dbReference type="GO" id="GO:0046983">
    <property type="term" value="F:protein dimerization activity"/>
    <property type="evidence" value="ECO:0007669"/>
    <property type="project" value="InterPro"/>
</dbReference>
<dbReference type="GO" id="GO:0000977">
    <property type="term" value="F:RNA polymerase II transcription regulatory region sequence-specific DNA binding"/>
    <property type="evidence" value="ECO:0007669"/>
    <property type="project" value="InterPro"/>
</dbReference>
<dbReference type="GO" id="GO:0009908">
    <property type="term" value="P:flower development"/>
    <property type="evidence" value="ECO:0007669"/>
    <property type="project" value="UniProtKB-KW"/>
</dbReference>
<dbReference type="GO" id="GO:0045944">
    <property type="term" value="P:positive regulation of transcription by RNA polymerase II"/>
    <property type="evidence" value="ECO:0007669"/>
    <property type="project" value="InterPro"/>
</dbReference>
<dbReference type="CDD" id="cd00265">
    <property type="entry name" value="MADS_MEF2_like"/>
    <property type="match status" value="1"/>
</dbReference>
<dbReference type="FunFam" id="3.40.1810.10:FF:000009">
    <property type="entry name" value="agamous-like MADS-box protein AGL11"/>
    <property type="match status" value="1"/>
</dbReference>
<dbReference type="Gene3D" id="3.40.1810.10">
    <property type="entry name" value="Transcription factor, MADS-box"/>
    <property type="match status" value="1"/>
</dbReference>
<dbReference type="InterPro" id="IPR050142">
    <property type="entry name" value="MADS-box/MEF2_TF"/>
</dbReference>
<dbReference type="InterPro" id="IPR033896">
    <property type="entry name" value="MEF2-like_N"/>
</dbReference>
<dbReference type="InterPro" id="IPR002487">
    <property type="entry name" value="TF_Kbox"/>
</dbReference>
<dbReference type="InterPro" id="IPR002100">
    <property type="entry name" value="TF_MADSbox"/>
</dbReference>
<dbReference type="InterPro" id="IPR036879">
    <property type="entry name" value="TF_MADSbox_sf"/>
</dbReference>
<dbReference type="PANTHER" id="PTHR48019">
    <property type="entry name" value="SERUM RESPONSE FACTOR HOMOLOG"/>
    <property type="match status" value="1"/>
</dbReference>
<dbReference type="Pfam" id="PF01486">
    <property type="entry name" value="K-box"/>
    <property type="match status" value="1"/>
</dbReference>
<dbReference type="Pfam" id="PF00319">
    <property type="entry name" value="SRF-TF"/>
    <property type="match status" value="1"/>
</dbReference>
<dbReference type="PRINTS" id="PR00404">
    <property type="entry name" value="MADSDOMAIN"/>
</dbReference>
<dbReference type="SMART" id="SM00432">
    <property type="entry name" value="MADS"/>
    <property type="match status" value="1"/>
</dbReference>
<dbReference type="SUPFAM" id="SSF55455">
    <property type="entry name" value="SRF-like"/>
    <property type="match status" value="1"/>
</dbReference>
<dbReference type="PROSITE" id="PS51297">
    <property type="entry name" value="K_BOX"/>
    <property type="match status" value="1"/>
</dbReference>
<dbReference type="PROSITE" id="PS00350">
    <property type="entry name" value="MADS_BOX_1"/>
    <property type="match status" value="1"/>
</dbReference>
<dbReference type="PROSITE" id="PS50066">
    <property type="entry name" value="MADS_BOX_2"/>
    <property type="match status" value="1"/>
</dbReference>
<gene>
    <name type="primary">AGL1</name>
    <name type="synonym">SHP1</name>
    <name type="ordered locus">At3g58780</name>
    <name type="ORF">T20N10_130</name>
</gene>
<protein>
    <recommendedName>
        <fullName>Agamous-like MADS-box protein AGL1</fullName>
    </recommendedName>
    <alternativeName>
        <fullName>Protein SHATTERPROOF 1</fullName>
    </alternativeName>
</protein>
<sequence>MEEGGSSHDAESSKKLGRGKIEIKRIENTTNRQVTFCKRRNGLLKKAYELSVLCDAEVALVIFSTRGRLYEYANNSVRGTIERYKKACSDAVNPPSVTEANTQYYQQEASKLRRQIRDIQNSNRHIVGESLGSLNFKELKNLEGRLEKGISRVRSKKNELLVAEIEYMQKREMELQHNNMYLRAKIAEGARLNPDQQESSVIQGTTVYESGVSSHDQSQHYNRNYIPVNLLEPNQQFSGQDQPPLQLV</sequence>
<evidence type="ECO:0000255" key="1">
    <source>
        <dbReference type="PROSITE-ProRule" id="PRU00251"/>
    </source>
</evidence>
<evidence type="ECO:0000255" key="2">
    <source>
        <dbReference type="PROSITE-ProRule" id="PRU00629"/>
    </source>
</evidence>
<evidence type="ECO:0000269" key="3">
    <source>
    </source>
</evidence>
<evidence type="ECO:0000269" key="4">
    <source>
    </source>
</evidence>
<accession>P29381</accession>
<keyword id="KW-0025">Alternative splicing</keyword>
<keyword id="KW-0217">Developmental protein</keyword>
<keyword id="KW-0238">DNA-binding</keyword>
<keyword id="KW-0287">Flowering</keyword>
<keyword id="KW-0341">Growth regulation</keyword>
<keyword id="KW-0539">Nucleus</keyword>
<keyword id="KW-1185">Reference proteome</keyword>
<keyword id="KW-0804">Transcription</keyword>
<keyword id="KW-0805">Transcription regulation</keyword>
<feature type="chain" id="PRO_0000199457" description="Agamous-like MADS-box protein AGL1">
    <location>
        <begin position="1"/>
        <end position="248"/>
    </location>
</feature>
<feature type="domain" description="MADS-box" evidence="1">
    <location>
        <begin position="18"/>
        <end position="72"/>
    </location>
</feature>
<feature type="domain" description="K-box" evidence="2">
    <location>
        <begin position="102"/>
        <end position="192"/>
    </location>
</feature>